<name>SSPF_BACCR</name>
<organism>
    <name type="scientific">Bacillus cereus (strain ATCC 14579 / DSM 31 / CCUG 7414 / JCM 2152 / NBRC 15305 / NCIMB 9373 / NCTC 2599 / NRRL B-3711)</name>
    <dbReference type="NCBI Taxonomy" id="226900"/>
    <lineage>
        <taxon>Bacteria</taxon>
        <taxon>Bacillati</taxon>
        <taxon>Bacillota</taxon>
        <taxon>Bacilli</taxon>
        <taxon>Bacillales</taxon>
        <taxon>Bacillaceae</taxon>
        <taxon>Bacillus</taxon>
        <taxon>Bacillus cereus group</taxon>
    </lineage>
</organism>
<evidence type="ECO:0000255" key="1"/>
<evidence type="ECO:0000305" key="2"/>
<protein>
    <recommendedName>
        <fullName>Protein SspF</fullName>
    </recommendedName>
</protein>
<gene>
    <name type="primary">sspF</name>
    <name type="ordered locus">BC_0049</name>
</gene>
<sequence length="59" mass="6828">MSRRRGVMSNQFKEELAKELGFYDVVQKEGWGGIRAKDAGNMVKRAIEIAEQQLMKRNQ</sequence>
<proteinExistence type="inferred from homology"/>
<feature type="chain" id="PRO_0000196316" description="Protein SspF">
    <location>
        <begin position="1"/>
        <end position="59"/>
    </location>
</feature>
<feature type="site" description="Cleavage; by spore protease" evidence="1">
    <location>
        <begin position="15"/>
        <end position="16"/>
    </location>
</feature>
<accession>P0A4F6</accession>
<accession>P52970</accession>
<keyword id="KW-0238">DNA-binding</keyword>
<keyword id="KW-1185">Reference proteome</keyword>
<keyword id="KW-0749">Sporulation</keyword>
<reference key="1">
    <citation type="journal article" date="2003" name="Nature">
        <title>Genome sequence of Bacillus cereus and comparative analysis with Bacillus anthracis.</title>
        <authorList>
            <person name="Ivanova N."/>
            <person name="Sorokin A."/>
            <person name="Anderson I."/>
            <person name="Galleron N."/>
            <person name="Candelon B."/>
            <person name="Kapatral V."/>
            <person name="Bhattacharyya A."/>
            <person name="Reznik G."/>
            <person name="Mikhailova N."/>
            <person name="Lapidus A."/>
            <person name="Chu L."/>
            <person name="Mazur M."/>
            <person name="Goltsman E."/>
            <person name="Larsen N."/>
            <person name="D'Souza M."/>
            <person name="Walunas T."/>
            <person name="Grechkin Y."/>
            <person name="Pusch G."/>
            <person name="Haselkorn R."/>
            <person name="Fonstein M."/>
            <person name="Ehrlich S.D."/>
            <person name="Overbeek R."/>
            <person name="Kyrpides N.C."/>
        </authorList>
    </citation>
    <scope>NUCLEOTIDE SEQUENCE [LARGE SCALE GENOMIC DNA]</scope>
    <source>
        <strain>ATCC 14579 / DSM 31 / CCUG 7414 / JCM 2152 / NBRC 15305 / NCIMB 9373 / NCTC 2599 / NRRL B-3711</strain>
    </source>
</reference>
<dbReference type="EMBL" id="AE016877">
    <property type="protein sequence ID" value="AAP07147.1"/>
    <property type="molecule type" value="Genomic_DNA"/>
</dbReference>
<dbReference type="RefSeq" id="NP_829946.1">
    <property type="nucleotide sequence ID" value="NC_004722.1"/>
</dbReference>
<dbReference type="RefSeq" id="WP_002094215.1">
    <property type="nucleotide sequence ID" value="NZ_CP138336.1"/>
</dbReference>
<dbReference type="SMR" id="P0A4F6"/>
<dbReference type="STRING" id="226900.BC_0049"/>
<dbReference type="KEGG" id="bce:BC0049"/>
<dbReference type="PATRIC" id="fig|226900.8.peg.66"/>
<dbReference type="HOGENOM" id="CLU_169738_3_0_9"/>
<dbReference type="Proteomes" id="UP000001417">
    <property type="component" value="Chromosome"/>
</dbReference>
<dbReference type="GO" id="GO:0003690">
    <property type="term" value="F:double-stranded DNA binding"/>
    <property type="evidence" value="ECO:0007669"/>
    <property type="project" value="InterPro"/>
</dbReference>
<dbReference type="GO" id="GO:0006265">
    <property type="term" value="P:DNA topological change"/>
    <property type="evidence" value="ECO:0007669"/>
    <property type="project" value="InterPro"/>
</dbReference>
<dbReference type="GO" id="GO:0030435">
    <property type="term" value="P:sporulation resulting in formation of a cellular spore"/>
    <property type="evidence" value="ECO:0007669"/>
    <property type="project" value="UniProtKB-KW"/>
</dbReference>
<dbReference type="Gene3D" id="6.10.10.80">
    <property type="entry name" value="Small, acid-soluble spore protein, alpha/beta type-like"/>
    <property type="match status" value="1"/>
</dbReference>
<dbReference type="InterPro" id="IPR001448">
    <property type="entry name" value="SASP_alpha/beta-type"/>
</dbReference>
<dbReference type="InterPro" id="IPR018126">
    <property type="entry name" value="SASP_alpha/beta-type_CS"/>
</dbReference>
<dbReference type="InterPro" id="IPR038300">
    <property type="entry name" value="SASP_sf_alpha/beta"/>
</dbReference>
<dbReference type="Pfam" id="PF00269">
    <property type="entry name" value="SASP"/>
    <property type="match status" value="1"/>
</dbReference>
<dbReference type="PROSITE" id="PS00304">
    <property type="entry name" value="SASP_1"/>
    <property type="match status" value="1"/>
</dbReference>
<comment type="function">
    <text>May play some important role in either sporulation or the dormant spore.</text>
</comment>
<comment type="similarity">
    <text evidence="2">Belongs to the alpha/beta-type SASP family.</text>
</comment>